<keyword id="KW-0963">Cytoplasm</keyword>
<keyword id="KW-0378">Hydrolase</keyword>
<keyword id="KW-0479">Metal-binding</keyword>
<keyword id="KW-0533">Nickel</keyword>
<keyword id="KW-1185">Reference proteome</keyword>
<proteinExistence type="evidence at protein level"/>
<feature type="chain" id="PRO_0000067538" description="Urease subunit alpha">
    <location>
        <begin position="1"/>
        <end position="569"/>
    </location>
</feature>
<feature type="domain" description="Urease" evidence="1">
    <location>
        <begin position="132"/>
        <end position="569"/>
    </location>
</feature>
<feature type="active site" description="Proton donor" evidence="1">
    <location>
        <position position="323"/>
    </location>
</feature>
<feature type="binding site" evidence="1">
    <location>
        <position position="137"/>
    </location>
    <ligand>
        <name>Ni(2+)</name>
        <dbReference type="ChEBI" id="CHEBI:49786"/>
        <label>1</label>
    </ligand>
</feature>
<feature type="binding site" evidence="1">
    <location>
        <position position="139"/>
    </location>
    <ligand>
        <name>Ni(2+)</name>
        <dbReference type="ChEBI" id="CHEBI:49786"/>
        <label>1</label>
    </ligand>
</feature>
<feature type="binding site" description="via carbamate group" evidence="1">
    <location>
        <position position="220"/>
    </location>
    <ligand>
        <name>Ni(2+)</name>
        <dbReference type="ChEBI" id="CHEBI:49786"/>
        <label>1</label>
    </ligand>
</feature>
<feature type="binding site" description="via carbamate group" evidence="1">
    <location>
        <position position="220"/>
    </location>
    <ligand>
        <name>Ni(2+)</name>
        <dbReference type="ChEBI" id="CHEBI:49786"/>
        <label>2</label>
    </ligand>
</feature>
<feature type="binding site" evidence="1">
    <location>
        <position position="222"/>
    </location>
    <ligand>
        <name>substrate</name>
    </ligand>
</feature>
<feature type="binding site" evidence="1">
    <location>
        <position position="249"/>
    </location>
    <ligand>
        <name>Ni(2+)</name>
        <dbReference type="ChEBI" id="CHEBI:49786"/>
        <label>2</label>
    </ligand>
</feature>
<feature type="binding site" evidence="1">
    <location>
        <position position="275"/>
    </location>
    <ligand>
        <name>Ni(2+)</name>
        <dbReference type="ChEBI" id="CHEBI:49786"/>
        <label>2</label>
    </ligand>
</feature>
<feature type="binding site" evidence="1">
    <location>
        <position position="363"/>
    </location>
    <ligand>
        <name>Ni(2+)</name>
        <dbReference type="ChEBI" id="CHEBI:49786"/>
        <label>1</label>
    </ligand>
</feature>
<feature type="modified residue" description="N6-carboxylysine" evidence="1">
    <location>
        <position position="220"/>
    </location>
</feature>
<accession>P77837</accession>
<comment type="catalytic activity">
    <reaction evidence="1 2 3">
        <text>urea + 2 H2O + H(+) = hydrogencarbonate + 2 NH4(+)</text>
        <dbReference type="Rhea" id="RHEA:20557"/>
        <dbReference type="ChEBI" id="CHEBI:15377"/>
        <dbReference type="ChEBI" id="CHEBI:15378"/>
        <dbReference type="ChEBI" id="CHEBI:16199"/>
        <dbReference type="ChEBI" id="CHEBI:17544"/>
        <dbReference type="ChEBI" id="CHEBI:28938"/>
        <dbReference type="EC" id="3.5.1.5"/>
    </reaction>
</comment>
<comment type="cofactor">
    <cofactor evidence="1">
        <name>Ni cation</name>
        <dbReference type="ChEBI" id="CHEBI:25516"/>
    </cofactor>
    <text evidence="1">Binds 2 nickel ions per subunit.</text>
</comment>
<comment type="pathway">
    <text evidence="1">Nitrogen metabolism; urea degradation; CO(2) and NH(3) from urea (urease route): step 1/1.</text>
</comment>
<comment type="subunit">
    <text evidence="1">Heterotrimer of UreA (gamma), UreB (beta) and UreC (alpha) subunits. Three heterotrimers associate to form the active enzyme.</text>
</comment>
<comment type="subcellular location">
    <subcellularLocation>
        <location evidence="1">Cytoplasm</location>
    </subcellularLocation>
</comment>
<comment type="PTM">
    <text evidence="1">Carboxylation allows a single lysine to coordinate two nickel ions.</text>
</comment>
<comment type="similarity">
    <text evidence="1">Belongs to the metallo-dependent hydrolases superfamily. Urease alpha subunit family.</text>
</comment>
<reference key="1">
    <citation type="journal article" date="1997" name="J. Bacteriol.">
        <title>The Bacillus subtilis ureABC operon.</title>
        <authorList>
            <person name="Cruz-Ramos H."/>
            <person name="Glaser P."/>
            <person name="Wray L.V. Jr."/>
            <person name="Fisher S.H."/>
        </authorList>
    </citation>
    <scope>NUCLEOTIDE SEQUENCE [GENOMIC DNA]</scope>
    <scope>CATALYTIC ACTIVITY</scope>
    <source>
        <strain>168</strain>
    </source>
</reference>
<reference key="2">
    <citation type="journal article" date="1997" name="Nature">
        <title>The complete genome sequence of the Gram-positive bacterium Bacillus subtilis.</title>
        <authorList>
            <person name="Kunst F."/>
            <person name="Ogasawara N."/>
            <person name="Moszer I."/>
            <person name="Albertini A.M."/>
            <person name="Alloni G."/>
            <person name="Azevedo V."/>
            <person name="Bertero M.G."/>
            <person name="Bessieres P."/>
            <person name="Bolotin A."/>
            <person name="Borchert S."/>
            <person name="Borriss R."/>
            <person name="Boursier L."/>
            <person name="Brans A."/>
            <person name="Braun M."/>
            <person name="Brignell S.C."/>
            <person name="Bron S."/>
            <person name="Brouillet S."/>
            <person name="Bruschi C.V."/>
            <person name="Caldwell B."/>
            <person name="Capuano V."/>
            <person name="Carter N.M."/>
            <person name="Choi S.-K."/>
            <person name="Codani J.-J."/>
            <person name="Connerton I.F."/>
            <person name="Cummings N.J."/>
            <person name="Daniel R.A."/>
            <person name="Denizot F."/>
            <person name="Devine K.M."/>
            <person name="Duesterhoeft A."/>
            <person name="Ehrlich S.D."/>
            <person name="Emmerson P.T."/>
            <person name="Entian K.-D."/>
            <person name="Errington J."/>
            <person name="Fabret C."/>
            <person name="Ferrari E."/>
            <person name="Foulger D."/>
            <person name="Fritz C."/>
            <person name="Fujita M."/>
            <person name="Fujita Y."/>
            <person name="Fuma S."/>
            <person name="Galizzi A."/>
            <person name="Galleron N."/>
            <person name="Ghim S.-Y."/>
            <person name="Glaser P."/>
            <person name="Goffeau A."/>
            <person name="Golightly E.J."/>
            <person name="Grandi G."/>
            <person name="Guiseppi G."/>
            <person name="Guy B.J."/>
            <person name="Haga K."/>
            <person name="Haiech J."/>
            <person name="Harwood C.R."/>
            <person name="Henaut A."/>
            <person name="Hilbert H."/>
            <person name="Holsappel S."/>
            <person name="Hosono S."/>
            <person name="Hullo M.-F."/>
            <person name="Itaya M."/>
            <person name="Jones L.-M."/>
            <person name="Joris B."/>
            <person name="Karamata D."/>
            <person name="Kasahara Y."/>
            <person name="Klaerr-Blanchard M."/>
            <person name="Klein C."/>
            <person name="Kobayashi Y."/>
            <person name="Koetter P."/>
            <person name="Koningstein G."/>
            <person name="Krogh S."/>
            <person name="Kumano M."/>
            <person name="Kurita K."/>
            <person name="Lapidus A."/>
            <person name="Lardinois S."/>
            <person name="Lauber J."/>
            <person name="Lazarevic V."/>
            <person name="Lee S.-M."/>
            <person name="Levine A."/>
            <person name="Liu H."/>
            <person name="Masuda S."/>
            <person name="Mauel C."/>
            <person name="Medigue C."/>
            <person name="Medina N."/>
            <person name="Mellado R.P."/>
            <person name="Mizuno M."/>
            <person name="Moestl D."/>
            <person name="Nakai S."/>
            <person name="Noback M."/>
            <person name="Noone D."/>
            <person name="O'Reilly M."/>
            <person name="Ogawa K."/>
            <person name="Ogiwara A."/>
            <person name="Oudega B."/>
            <person name="Park S.-H."/>
            <person name="Parro V."/>
            <person name="Pohl T.M."/>
            <person name="Portetelle D."/>
            <person name="Porwollik S."/>
            <person name="Prescott A.M."/>
            <person name="Presecan E."/>
            <person name="Pujic P."/>
            <person name="Purnelle B."/>
            <person name="Rapoport G."/>
            <person name="Rey M."/>
            <person name="Reynolds S."/>
            <person name="Rieger M."/>
            <person name="Rivolta C."/>
            <person name="Rocha E."/>
            <person name="Roche B."/>
            <person name="Rose M."/>
            <person name="Sadaie Y."/>
            <person name="Sato T."/>
            <person name="Scanlan E."/>
            <person name="Schleich S."/>
            <person name="Schroeter R."/>
            <person name="Scoffone F."/>
            <person name="Sekiguchi J."/>
            <person name="Sekowska A."/>
            <person name="Seror S.J."/>
            <person name="Serror P."/>
            <person name="Shin B.-S."/>
            <person name="Soldo B."/>
            <person name="Sorokin A."/>
            <person name="Tacconi E."/>
            <person name="Takagi T."/>
            <person name="Takahashi H."/>
            <person name="Takemaru K."/>
            <person name="Takeuchi M."/>
            <person name="Tamakoshi A."/>
            <person name="Tanaka T."/>
            <person name="Terpstra P."/>
            <person name="Tognoni A."/>
            <person name="Tosato V."/>
            <person name="Uchiyama S."/>
            <person name="Vandenbol M."/>
            <person name="Vannier F."/>
            <person name="Vassarotti A."/>
            <person name="Viari A."/>
            <person name="Wambutt R."/>
            <person name="Wedler E."/>
            <person name="Wedler H."/>
            <person name="Weitzenegger T."/>
            <person name="Winters P."/>
            <person name="Wipat A."/>
            <person name="Yamamoto H."/>
            <person name="Yamane K."/>
            <person name="Yasumoto K."/>
            <person name="Yata K."/>
            <person name="Yoshida K."/>
            <person name="Yoshikawa H.-F."/>
            <person name="Zumstein E."/>
            <person name="Yoshikawa H."/>
            <person name="Danchin A."/>
        </authorList>
    </citation>
    <scope>NUCLEOTIDE SEQUENCE [LARGE SCALE GENOMIC DNA]</scope>
    <source>
        <strain>168</strain>
    </source>
</reference>
<reference key="3">
    <citation type="journal article" date="2005" name="J. Bacteriol.">
        <title>Biosynthesis of active Bacillus subtilis urease in the absence of known urease accessory proteins.</title>
        <authorList>
            <person name="Kim J.K."/>
            <person name="Mulrooney S.B."/>
            <person name="Hausinger R.P."/>
        </authorList>
    </citation>
    <scope>CATALYTIC ACTIVITY</scope>
</reference>
<protein>
    <recommendedName>
        <fullName evidence="1">Urease subunit alpha</fullName>
        <ecNumber evidence="1">3.5.1.5</ecNumber>
    </recommendedName>
    <alternativeName>
        <fullName evidence="1">Urea amidohydrolase subunit alpha</fullName>
    </alternativeName>
</protein>
<gene>
    <name evidence="1" type="primary">ureC</name>
    <name type="ordered locus">BSU36640</name>
</gene>
<organism>
    <name type="scientific">Bacillus subtilis (strain 168)</name>
    <dbReference type="NCBI Taxonomy" id="224308"/>
    <lineage>
        <taxon>Bacteria</taxon>
        <taxon>Bacillati</taxon>
        <taxon>Bacillota</taxon>
        <taxon>Bacilli</taxon>
        <taxon>Bacillales</taxon>
        <taxon>Bacillaceae</taxon>
        <taxon>Bacillus</taxon>
    </lineage>
</organism>
<evidence type="ECO:0000255" key="1">
    <source>
        <dbReference type="HAMAP-Rule" id="MF_01953"/>
    </source>
</evidence>
<evidence type="ECO:0000269" key="2">
    <source>
    </source>
</evidence>
<evidence type="ECO:0000269" key="3">
    <source>
    </source>
</evidence>
<dbReference type="EC" id="3.5.1.5" evidence="1"/>
<dbReference type="EMBL" id="Y08559">
    <property type="protein sequence ID" value="CAA69859.1"/>
    <property type="molecule type" value="Genomic_DNA"/>
</dbReference>
<dbReference type="EMBL" id="AL009126">
    <property type="protein sequence ID" value="CAB15681.1"/>
    <property type="molecule type" value="Genomic_DNA"/>
</dbReference>
<dbReference type="PIR" id="D69729">
    <property type="entry name" value="D69729"/>
</dbReference>
<dbReference type="RefSeq" id="NP_391545.1">
    <property type="nucleotide sequence ID" value="NC_000964.3"/>
</dbReference>
<dbReference type="RefSeq" id="WP_003243090.1">
    <property type="nucleotide sequence ID" value="NZ_OZ025638.1"/>
</dbReference>
<dbReference type="SMR" id="P77837"/>
<dbReference type="FunCoup" id="P77837">
    <property type="interactions" value="360"/>
</dbReference>
<dbReference type="STRING" id="224308.BSU36640"/>
<dbReference type="MEROPS" id="M38.982"/>
<dbReference type="PaxDb" id="224308-BSU36640"/>
<dbReference type="EnsemblBacteria" id="CAB15681">
    <property type="protein sequence ID" value="CAB15681"/>
    <property type="gene ID" value="BSU_36640"/>
</dbReference>
<dbReference type="GeneID" id="936958"/>
<dbReference type="KEGG" id="bsu:BSU36640"/>
<dbReference type="PATRIC" id="fig|224308.179.peg.3965"/>
<dbReference type="eggNOG" id="COG0804">
    <property type="taxonomic scope" value="Bacteria"/>
</dbReference>
<dbReference type="InParanoid" id="P77837"/>
<dbReference type="OrthoDB" id="9802793at2"/>
<dbReference type="PhylomeDB" id="P77837"/>
<dbReference type="BioCyc" id="BSUB:BSU36640-MONOMER"/>
<dbReference type="UniPathway" id="UPA00258">
    <property type="reaction ID" value="UER00370"/>
</dbReference>
<dbReference type="Proteomes" id="UP000001570">
    <property type="component" value="Chromosome"/>
</dbReference>
<dbReference type="GO" id="GO:0005737">
    <property type="term" value="C:cytoplasm"/>
    <property type="evidence" value="ECO:0007669"/>
    <property type="project" value="UniProtKB-SubCell"/>
</dbReference>
<dbReference type="GO" id="GO:0016151">
    <property type="term" value="F:nickel cation binding"/>
    <property type="evidence" value="ECO:0007669"/>
    <property type="project" value="UniProtKB-UniRule"/>
</dbReference>
<dbReference type="GO" id="GO:0009039">
    <property type="term" value="F:urease activity"/>
    <property type="evidence" value="ECO:0007669"/>
    <property type="project" value="UniProtKB-UniRule"/>
</dbReference>
<dbReference type="GO" id="GO:0043419">
    <property type="term" value="P:urea catabolic process"/>
    <property type="evidence" value="ECO:0007669"/>
    <property type="project" value="UniProtKB-UniRule"/>
</dbReference>
<dbReference type="CDD" id="cd00375">
    <property type="entry name" value="Urease_alpha"/>
    <property type="match status" value="1"/>
</dbReference>
<dbReference type="Gene3D" id="3.20.20.140">
    <property type="entry name" value="Metal-dependent hydrolases"/>
    <property type="match status" value="1"/>
</dbReference>
<dbReference type="Gene3D" id="2.30.40.10">
    <property type="entry name" value="Urease, subunit C, domain 1"/>
    <property type="match status" value="1"/>
</dbReference>
<dbReference type="HAMAP" id="MF_01953">
    <property type="entry name" value="Urease_alpha"/>
    <property type="match status" value="1"/>
</dbReference>
<dbReference type="InterPro" id="IPR006680">
    <property type="entry name" value="Amidohydro-rel"/>
</dbReference>
<dbReference type="InterPro" id="IPR011059">
    <property type="entry name" value="Metal-dep_hydrolase_composite"/>
</dbReference>
<dbReference type="InterPro" id="IPR032466">
    <property type="entry name" value="Metal_Hydrolase"/>
</dbReference>
<dbReference type="InterPro" id="IPR011612">
    <property type="entry name" value="Urease_alpha_N_dom"/>
</dbReference>
<dbReference type="InterPro" id="IPR050112">
    <property type="entry name" value="Urease_alpha_subunit"/>
</dbReference>
<dbReference type="InterPro" id="IPR017950">
    <property type="entry name" value="Urease_AS"/>
</dbReference>
<dbReference type="InterPro" id="IPR005848">
    <property type="entry name" value="Urease_asu"/>
</dbReference>
<dbReference type="InterPro" id="IPR017951">
    <property type="entry name" value="Urease_asu_c"/>
</dbReference>
<dbReference type="InterPro" id="IPR029754">
    <property type="entry name" value="Urease_Ni-bd"/>
</dbReference>
<dbReference type="NCBIfam" id="NF009685">
    <property type="entry name" value="PRK13206.1"/>
    <property type="match status" value="1"/>
</dbReference>
<dbReference type="NCBIfam" id="NF009686">
    <property type="entry name" value="PRK13207.1"/>
    <property type="match status" value="1"/>
</dbReference>
<dbReference type="NCBIfam" id="TIGR01792">
    <property type="entry name" value="urease_alph"/>
    <property type="match status" value="1"/>
</dbReference>
<dbReference type="PANTHER" id="PTHR43440">
    <property type="entry name" value="UREASE"/>
    <property type="match status" value="1"/>
</dbReference>
<dbReference type="PANTHER" id="PTHR43440:SF1">
    <property type="entry name" value="UREASE"/>
    <property type="match status" value="1"/>
</dbReference>
<dbReference type="Pfam" id="PF01979">
    <property type="entry name" value="Amidohydro_1"/>
    <property type="match status" value="1"/>
</dbReference>
<dbReference type="Pfam" id="PF00449">
    <property type="entry name" value="Urease_alpha"/>
    <property type="match status" value="1"/>
</dbReference>
<dbReference type="PRINTS" id="PR01752">
    <property type="entry name" value="UREASE"/>
</dbReference>
<dbReference type="SUPFAM" id="SSF51338">
    <property type="entry name" value="Composite domain of metallo-dependent hydrolases"/>
    <property type="match status" value="2"/>
</dbReference>
<dbReference type="SUPFAM" id="SSF51556">
    <property type="entry name" value="Metallo-dependent hydrolases"/>
    <property type="match status" value="1"/>
</dbReference>
<dbReference type="PROSITE" id="PS01120">
    <property type="entry name" value="UREASE_1"/>
    <property type="match status" value="1"/>
</dbReference>
<dbReference type="PROSITE" id="PS00145">
    <property type="entry name" value="UREASE_2"/>
    <property type="match status" value="1"/>
</dbReference>
<dbReference type="PROSITE" id="PS51368">
    <property type="entry name" value="UREASE_3"/>
    <property type="match status" value="1"/>
</dbReference>
<name>URE1_BACSU</name>
<sequence length="569" mass="61187">MKMSREEYAELFGPTTGDKIRLGDTDLWIEVEKDFTVYGEEMIFGGGKTIRDGMGQNGRITGKDGALDLVITNVVLLDYTGIVKADVGVKDGRIVGVGKSGNPDIMDGVDPHMVIGAGTEVISGEGKILTAGGVDTHIHFICPQQMEVALSSGVTTLLGGGTGPATGSKATTCTSGAWYMARMLEAAEEFPINVGFLGKGNASDKAPLIEQVEAGAIGLKLHEDWGTTPSAIKTCMEVVDEADIQVAIHTDTINEAGFLENTLDAIGDRVIHTYHIEGAGGGHAPDIMKLASYANILPSSTTPTIPYTVNTMDEHLDMMMVCHHLDAKVPEDVAFSHSRIRAATIAAEDILHDIGAISMTSSDSQAMGRVGEVIIRTWQVADKMKKQRGALAGENGNDNVRAKRYIAKYTINPAITHGLSHEVGSVEKGKLADLVLWDPVFFGVKPELVLKGGMIARAQMGDPNASIPTPEPVFMRQMYASYGKANRSTSITFMSQASIERGVAESLGLEKRISPVKNIRKLSKLDMKLNSALPKIEIDPKTYQVFADGEELSCQPVDYVPLGQRYFLF</sequence>